<sequence length="200" mass="23500">MFIGITQRLICNDSYHEKRECLALDWGKLFNKDLFKNFTPLPLSYEIDFSYYKHLIKAVILSGGNDLSFYSPNVLSKKRDLYEKQVIEICLEEKIPLLGICRGAQMIAHYFNSHISPCENHIGKHEVFFSKEKFISNSFHNFAIEKLGEDLVELCLAKDNTIEAFKHKYENIFGIMWHIERENGLNNIQILKEWFSLIKE</sequence>
<name>GCDPH_CAMJE</name>
<gene>
    <name evidence="5" type="ordered locus">Cj1417c</name>
</gene>
<reference key="1">
    <citation type="journal article" date="2000" name="Nature">
        <title>The genome sequence of the food-borne pathogen Campylobacter jejuni reveals hypervariable sequences.</title>
        <authorList>
            <person name="Parkhill J."/>
            <person name="Wren B.W."/>
            <person name="Mungall K.L."/>
            <person name="Ketley J.M."/>
            <person name="Churcher C.M."/>
            <person name="Basham D."/>
            <person name="Chillingworth T."/>
            <person name="Davies R.M."/>
            <person name="Feltwell T."/>
            <person name="Holroyd S."/>
            <person name="Jagels K."/>
            <person name="Karlyshev A.V."/>
            <person name="Moule S."/>
            <person name="Pallen M.J."/>
            <person name="Penn C.W."/>
            <person name="Quail M.A."/>
            <person name="Rajandream M.A."/>
            <person name="Rutherford K.M."/>
            <person name="van Vliet A.H.M."/>
            <person name="Whitehead S."/>
            <person name="Barrell B.G."/>
        </authorList>
    </citation>
    <scope>NUCLEOTIDE SEQUENCE [LARGE SCALE GENOMIC DNA]</scope>
    <source>
        <strain>ATCC 700819 / NCTC 11168</strain>
    </source>
</reference>
<reference key="2">
    <citation type="journal article" date="2007" name="J. Biol. Chem.">
        <title>Commonality and biosynthesis of the O-methyl phosphoramidate capsule modification in Campylobacter jejuni.</title>
        <authorList>
            <person name="McNally D.J."/>
            <person name="Lamoureux M.P."/>
            <person name="Karlyshev A.V."/>
            <person name="Fiori L.M."/>
            <person name="Li J."/>
            <person name="Thacker G."/>
            <person name="Coleman R.A."/>
            <person name="Khieu N.H."/>
            <person name="Wren B.W."/>
            <person name="Brisson J.R."/>
            <person name="Jarrell H.C."/>
            <person name="Szymanski C.M."/>
        </authorList>
    </citation>
    <scope>FUNCTION IN CAPSULE BIOSYNTHESIS</scope>
    <scope>PATHWAY</scope>
    <scope>DISRUPTION PHENOTYPE</scope>
    <source>
        <strain>ATCC 700819 / NCTC 11168</strain>
    </source>
</reference>
<reference key="3">
    <citation type="journal article" date="2017" name="Biochemistry">
        <title>Biosynthesis of nucleoside diphosphoramidates in Campylobacter jejuni.</title>
        <authorList>
            <person name="Taylor Z.W."/>
            <person name="Brown H.A."/>
            <person name="Holden H.M."/>
            <person name="Raushel F.M."/>
        </authorList>
    </citation>
    <scope>FUNCTION</scope>
    <scope>CATALYTIC ACTIVITY</scope>
    <scope>BIOPHYSICOCHEMICAL PROPERTIES</scope>
    <source>
        <strain>ATCC 700819 / NCTC 11168</strain>
    </source>
</reference>
<proteinExistence type="evidence at protein level"/>
<protein>
    <recommendedName>
        <fullName evidence="4">Gamma-glutamyl-CDP-amidate hydrolase</fullName>
        <ecNumber evidence="3">3.5.1.129</ecNumber>
    </recommendedName>
</protein>
<organism>
    <name type="scientific">Campylobacter jejuni subsp. jejuni serotype O:2 (strain ATCC 700819 / NCTC 11168)</name>
    <dbReference type="NCBI Taxonomy" id="192222"/>
    <lineage>
        <taxon>Bacteria</taxon>
        <taxon>Pseudomonadati</taxon>
        <taxon>Campylobacterota</taxon>
        <taxon>Epsilonproteobacteria</taxon>
        <taxon>Campylobacterales</taxon>
        <taxon>Campylobacteraceae</taxon>
        <taxon>Campylobacter</taxon>
    </lineage>
</organism>
<accession>Q0P8J7</accession>
<feature type="chain" id="PRO_0000445430" description="Gamma-glutamyl-CDP-amidate hydrolase">
    <location>
        <begin position="1"/>
        <end position="200"/>
    </location>
</feature>
<feature type="domain" description="Glutamine amidotransferase type-1" evidence="1">
    <location>
        <begin position="20"/>
        <end position="200"/>
    </location>
</feature>
<feature type="active site" description="Nucleophile" evidence="1">
    <location>
        <position position="101"/>
    </location>
</feature>
<feature type="active site" evidence="1">
    <location>
        <position position="178"/>
    </location>
</feature>
<feature type="active site" evidence="1">
    <location>
        <position position="180"/>
    </location>
</feature>
<dbReference type="EC" id="3.5.1.129" evidence="3"/>
<dbReference type="EMBL" id="AL111168">
    <property type="protein sequence ID" value="CAL35526.1"/>
    <property type="molecule type" value="Genomic_DNA"/>
</dbReference>
<dbReference type="PIR" id="A81287">
    <property type="entry name" value="A81287"/>
</dbReference>
<dbReference type="RefSeq" id="WP_002858074.1">
    <property type="nucleotide sequence ID" value="NZ_SZUC01000003.1"/>
</dbReference>
<dbReference type="RefSeq" id="YP_002344800.1">
    <property type="nucleotide sequence ID" value="NC_002163.1"/>
</dbReference>
<dbReference type="SMR" id="Q0P8J7"/>
<dbReference type="IntAct" id="Q0P8J7">
    <property type="interactions" value="15"/>
</dbReference>
<dbReference type="STRING" id="192222.Cj1417c"/>
<dbReference type="PaxDb" id="192222-Cj1417c"/>
<dbReference type="DNASU" id="905706"/>
<dbReference type="EnsemblBacteria" id="CAL35526">
    <property type="protein sequence ID" value="CAL35526"/>
    <property type="gene ID" value="Cj1417c"/>
</dbReference>
<dbReference type="GeneID" id="905706"/>
<dbReference type="KEGG" id="cje:Cj1417c"/>
<dbReference type="PATRIC" id="fig|192222.6.peg.1398"/>
<dbReference type="eggNOG" id="COG2071">
    <property type="taxonomic scope" value="Bacteria"/>
</dbReference>
<dbReference type="HOGENOM" id="CLU_030756_5_0_7"/>
<dbReference type="OrthoDB" id="9813383at2"/>
<dbReference type="BRENDA" id="3.5.1.129">
    <property type="organism ID" value="16305"/>
</dbReference>
<dbReference type="SABIO-RK" id="Q0P8J7"/>
<dbReference type="STRENDA-DB" id="GNLGQ9">
    <property type="experiment" value="Kinetic constants for Cj1417 from Campylobacter jejuni NCTC 11168"/>
</dbReference>
<dbReference type="UniPathway" id="UPA00934"/>
<dbReference type="Proteomes" id="UP000000799">
    <property type="component" value="Chromosome"/>
</dbReference>
<dbReference type="GO" id="GO:0005829">
    <property type="term" value="C:cytosol"/>
    <property type="evidence" value="ECO:0007669"/>
    <property type="project" value="TreeGrafter"/>
</dbReference>
<dbReference type="GO" id="GO:0016811">
    <property type="term" value="F:hydrolase activity, acting on carbon-nitrogen (but not peptide) bonds, in linear amides"/>
    <property type="evidence" value="ECO:0007669"/>
    <property type="project" value="InterPro"/>
</dbReference>
<dbReference type="GO" id="GO:0045227">
    <property type="term" value="P:capsule polysaccharide biosynthetic process"/>
    <property type="evidence" value="ECO:0007669"/>
    <property type="project" value="UniProtKB-UniPathway"/>
</dbReference>
<dbReference type="Gene3D" id="3.40.50.880">
    <property type="match status" value="1"/>
</dbReference>
<dbReference type="InterPro" id="IPR029062">
    <property type="entry name" value="Class_I_gatase-like"/>
</dbReference>
<dbReference type="InterPro" id="IPR017926">
    <property type="entry name" value="GATASE"/>
</dbReference>
<dbReference type="InterPro" id="IPR054647">
    <property type="entry name" value="GCDPHdlase"/>
</dbReference>
<dbReference type="InterPro" id="IPR044668">
    <property type="entry name" value="PuuD-like"/>
</dbReference>
<dbReference type="NCBIfam" id="NF045546">
    <property type="entry name" value="GCDPHdlase"/>
    <property type="match status" value="1"/>
</dbReference>
<dbReference type="PANTHER" id="PTHR43235">
    <property type="entry name" value="GLUTAMINE AMIDOTRANSFERASE PB2B2.05-RELATED"/>
    <property type="match status" value="1"/>
</dbReference>
<dbReference type="PANTHER" id="PTHR43235:SF1">
    <property type="entry name" value="GLUTAMINE AMIDOTRANSFERASE PB2B2.05-RELATED"/>
    <property type="match status" value="1"/>
</dbReference>
<dbReference type="Pfam" id="PF00117">
    <property type="entry name" value="GATase"/>
    <property type="match status" value="1"/>
</dbReference>
<dbReference type="SUPFAM" id="SSF52317">
    <property type="entry name" value="Class I glutamine amidotransferase-like"/>
    <property type="match status" value="1"/>
</dbReference>
<dbReference type="PROSITE" id="PS51273">
    <property type="entry name" value="GATASE_TYPE_1"/>
    <property type="match status" value="1"/>
</dbReference>
<evidence type="ECO:0000255" key="1">
    <source>
        <dbReference type="PROSITE-ProRule" id="PRU00605"/>
    </source>
</evidence>
<evidence type="ECO:0000269" key="2">
    <source>
    </source>
</evidence>
<evidence type="ECO:0000269" key="3">
    <source>
    </source>
</evidence>
<evidence type="ECO:0000303" key="4">
    <source>
    </source>
</evidence>
<evidence type="ECO:0000312" key="5">
    <source>
        <dbReference type="EMBL" id="CAL35526.1"/>
    </source>
</evidence>
<comment type="function">
    <text evidence="2 3">Involved in the biosynthesis of the O-methyl phosphoramidate (MeOPN) group found on the capsular polysaccharide (CPS) of C.jejuni (PubMed:17675288). Catalyzes the hydrolysis of CDP-L-glutamine to L-glutamate and cytidine diphosphoramidate (PubMed:29023101).</text>
</comment>
<comment type="catalytic activity">
    <reaction evidence="3">
        <text>N(5)-(cytidine 5'-diphosphoramidyl)-L-glutamine + H2O = cytidine 5'-diphosphoramidate + L-glutamate + H(+)</text>
        <dbReference type="Rhea" id="RHEA:57312"/>
        <dbReference type="ChEBI" id="CHEBI:15377"/>
        <dbReference type="ChEBI" id="CHEBI:15378"/>
        <dbReference type="ChEBI" id="CHEBI:29985"/>
        <dbReference type="ChEBI" id="CHEBI:141582"/>
        <dbReference type="ChEBI" id="CHEBI:141583"/>
        <dbReference type="EC" id="3.5.1.129"/>
    </reaction>
</comment>
<comment type="biophysicochemical properties">
    <kinetics>
        <KM evidence="3">28 uM for CDP-L-glutamine</KM>
        <text evidence="3">kcat is 34 min(-1).</text>
    </kinetics>
</comment>
<comment type="pathway">
    <text evidence="2">Capsule biogenesis; capsule polysaccharide biosynthesis.</text>
</comment>
<comment type="disruption phenotype">
    <text evidence="2">Mutant does not express the MeOPN CPS modification.</text>
</comment>
<keyword id="KW-0972">Capsule biogenesis/degradation</keyword>
<keyword id="KW-0378">Hydrolase</keyword>
<keyword id="KW-1185">Reference proteome</keyword>